<dbReference type="EC" id="2.1.1.45" evidence="1"/>
<dbReference type="EMBL" id="CP001161">
    <property type="protein sequence ID" value="ACL30789.1"/>
    <property type="molecule type" value="Genomic_DNA"/>
</dbReference>
<dbReference type="RefSeq" id="WP_009874393.1">
    <property type="nucleotide sequence ID" value="NC_011833.1"/>
</dbReference>
<dbReference type="SMR" id="B8D9L8"/>
<dbReference type="KEGG" id="bap:BUAP5A_433"/>
<dbReference type="HOGENOM" id="CLU_021669_0_0_6"/>
<dbReference type="OrthoDB" id="9774633at2"/>
<dbReference type="UniPathway" id="UPA00575"/>
<dbReference type="Proteomes" id="UP000006904">
    <property type="component" value="Chromosome"/>
</dbReference>
<dbReference type="GO" id="GO:0005829">
    <property type="term" value="C:cytosol"/>
    <property type="evidence" value="ECO:0007669"/>
    <property type="project" value="TreeGrafter"/>
</dbReference>
<dbReference type="GO" id="GO:0004799">
    <property type="term" value="F:thymidylate synthase activity"/>
    <property type="evidence" value="ECO:0007669"/>
    <property type="project" value="UniProtKB-UniRule"/>
</dbReference>
<dbReference type="GO" id="GO:0006231">
    <property type="term" value="P:dTMP biosynthetic process"/>
    <property type="evidence" value="ECO:0007669"/>
    <property type="project" value="UniProtKB-UniRule"/>
</dbReference>
<dbReference type="GO" id="GO:0006235">
    <property type="term" value="P:dTTP biosynthetic process"/>
    <property type="evidence" value="ECO:0007669"/>
    <property type="project" value="UniProtKB-UniRule"/>
</dbReference>
<dbReference type="GO" id="GO:0032259">
    <property type="term" value="P:methylation"/>
    <property type="evidence" value="ECO:0007669"/>
    <property type="project" value="UniProtKB-KW"/>
</dbReference>
<dbReference type="CDD" id="cd00351">
    <property type="entry name" value="TS_Pyrimidine_HMase"/>
    <property type="match status" value="1"/>
</dbReference>
<dbReference type="FunFam" id="3.30.572.10:FF:000013">
    <property type="entry name" value="Thymidylate synthase"/>
    <property type="match status" value="1"/>
</dbReference>
<dbReference type="Gene3D" id="3.30.572.10">
    <property type="entry name" value="Thymidylate synthase/dCMP hydroxymethylase domain"/>
    <property type="match status" value="1"/>
</dbReference>
<dbReference type="HAMAP" id="MF_00008">
    <property type="entry name" value="Thymidy_synth_bact"/>
    <property type="match status" value="1"/>
</dbReference>
<dbReference type="InterPro" id="IPR045097">
    <property type="entry name" value="Thymidate_synth/dCMP_Mease"/>
</dbReference>
<dbReference type="InterPro" id="IPR023451">
    <property type="entry name" value="Thymidate_synth/dCMP_Mease_dom"/>
</dbReference>
<dbReference type="InterPro" id="IPR036926">
    <property type="entry name" value="Thymidate_synth/dCMP_Mease_sf"/>
</dbReference>
<dbReference type="InterPro" id="IPR000398">
    <property type="entry name" value="Thymidylate_synthase"/>
</dbReference>
<dbReference type="InterPro" id="IPR020940">
    <property type="entry name" value="Thymidylate_synthase_AS"/>
</dbReference>
<dbReference type="NCBIfam" id="NF002497">
    <property type="entry name" value="PRK01827.1-3"/>
    <property type="match status" value="1"/>
</dbReference>
<dbReference type="NCBIfam" id="NF002499">
    <property type="entry name" value="PRK01827.1-5"/>
    <property type="match status" value="1"/>
</dbReference>
<dbReference type="NCBIfam" id="TIGR03284">
    <property type="entry name" value="thym_sym"/>
    <property type="match status" value="2"/>
</dbReference>
<dbReference type="PANTHER" id="PTHR11548:SF9">
    <property type="entry name" value="THYMIDYLATE SYNTHASE"/>
    <property type="match status" value="1"/>
</dbReference>
<dbReference type="PANTHER" id="PTHR11548">
    <property type="entry name" value="THYMIDYLATE SYNTHASE 1"/>
    <property type="match status" value="1"/>
</dbReference>
<dbReference type="Pfam" id="PF00303">
    <property type="entry name" value="Thymidylat_synt"/>
    <property type="match status" value="1"/>
</dbReference>
<dbReference type="PRINTS" id="PR00108">
    <property type="entry name" value="THYMDSNTHASE"/>
</dbReference>
<dbReference type="SUPFAM" id="SSF55831">
    <property type="entry name" value="Thymidylate synthase/dCMP hydroxymethylase"/>
    <property type="match status" value="1"/>
</dbReference>
<dbReference type="PROSITE" id="PS00091">
    <property type="entry name" value="THYMIDYLATE_SYNTHASE"/>
    <property type="match status" value="1"/>
</dbReference>
<protein>
    <recommendedName>
        <fullName evidence="1">Thymidylate synthase</fullName>
        <shortName evidence="1">TS</shortName>
        <shortName evidence="1">TSase</shortName>
        <ecNumber evidence="1">2.1.1.45</ecNumber>
    </recommendedName>
</protein>
<gene>
    <name evidence="1" type="primary">thyA</name>
    <name type="ordered locus">BUAP5A_433</name>
</gene>
<sequence>MKQYIKLIKKIIRVGNQKKDRTGTGTLSIFGYNMKFDLKKGFPLLTTKKCHIASIIYELLWFLKGDTNIAYLNENKISIWNNWANESGDVGPIYGKQWRNWSTPEGHEIDQIKNVLIQLKKNPDSRRMLVSSWNVGDIDKMRLPPCHVLFQFYVFNNTLSCQLYQRSCDVFLGLPFNIASYSILIHMIAQQCDLKVGDFLWTGGDVHLYNNHIELAKKQILRIPRTLPKLTILKKPQSLFQYCFEDFKIIGYHPYPAIKGKISI</sequence>
<proteinExistence type="inferred from homology"/>
<keyword id="KW-0963">Cytoplasm</keyword>
<keyword id="KW-0489">Methyltransferase</keyword>
<keyword id="KW-0545">Nucleotide biosynthesis</keyword>
<keyword id="KW-0808">Transferase</keyword>
<organism>
    <name type="scientific">Buchnera aphidicola subsp. Acyrthosiphon pisum (strain 5A)</name>
    <dbReference type="NCBI Taxonomy" id="563178"/>
    <lineage>
        <taxon>Bacteria</taxon>
        <taxon>Pseudomonadati</taxon>
        <taxon>Pseudomonadota</taxon>
        <taxon>Gammaproteobacteria</taxon>
        <taxon>Enterobacterales</taxon>
        <taxon>Erwiniaceae</taxon>
        <taxon>Buchnera</taxon>
    </lineage>
</organism>
<name>TYSY_BUCA5</name>
<accession>B8D9L8</accession>
<feature type="chain" id="PRO_1000197236" description="Thymidylate synthase">
    <location>
        <begin position="1"/>
        <end position="264"/>
    </location>
</feature>
<feature type="active site" description="Nucleophile" evidence="1">
    <location>
        <position position="146"/>
    </location>
</feature>
<feature type="binding site" description="in other chain" evidence="1">
    <location>
        <position position="21"/>
    </location>
    <ligand>
        <name>dUMP</name>
        <dbReference type="ChEBI" id="CHEBI:246422"/>
        <note>ligand shared between dimeric partners</note>
    </ligand>
</feature>
<feature type="binding site" evidence="1">
    <location>
        <position position="51"/>
    </location>
    <ligand>
        <name>(6R)-5,10-methylene-5,6,7,8-tetrahydrofolate</name>
        <dbReference type="ChEBI" id="CHEBI:15636"/>
    </ligand>
</feature>
<feature type="binding site" evidence="1">
    <location>
        <begin position="126"/>
        <end position="127"/>
    </location>
    <ligand>
        <name>dUMP</name>
        <dbReference type="ChEBI" id="CHEBI:246422"/>
        <note>ligand shared between dimeric partners</note>
    </ligand>
</feature>
<feature type="binding site" description="in other chain" evidence="1">
    <location>
        <begin position="166"/>
        <end position="169"/>
    </location>
    <ligand>
        <name>dUMP</name>
        <dbReference type="ChEBI" id="CHEBI:246422"/>
        <note>ligand shared between dimeric partners</note>
    </ligand>
</feature>
<feature type="binding site" evidence="1">
    <location>
        <position position="169"/>
    </location>
    <ligand>
        <name>(6R)-5,10-methylene-5,6,7,8-tetrahydrofolate</name>
        <dbReference type="ChEBI" id="CHEBI:15636"/>
    </ligand>
</feature>
<feature type="binding site" description="in other chain" evidence="1">
    <location>
        <position position="177"/>
    </location>
    <ligand>
        <name>dUMP</name>
        <dbReference type="ChEBI" id="CHEBI:246422"/>
        <note>ligand shared between dimeric partners</note>
    </ligand>
</feature>
<feature type="binding site" description="in other chain" evidence="1">
    <location>
        <begin position="207"/>
        <end position="209"/>
    </location>
    <ligand>
        <name>dUMP</name>
        <dbReference type="ChEBI" id="CHEBI:246422"/>
        <note>ligand shared between dimeric partners</note>
    </ligand>
</feature>
<feature type="binding site" evidence="1">
    <location>
        <position position="263"/>
    </location>
    <ligand>
        <name>(6R)-5,10-methylene-5,6,7,8-tetrahydrofolate</name>
        <dbReference type="ChEBI" id="CHEBI:15636"/>
    </ligand>
</feature>
<evidence type="ECO:0000255" key="1">
    <source>
        <dbReference type="HAMAP-Rule" id="MF_00008"/>
    </source>
</evidence>
<comment type="function">
    <text evidence="1">Catalyzes the reductive methylation of 2'-deoxyuridine-5'-monophosphate (dUMP) to 2'-deoxythymidine-5'-monophosphate (dTMP) while utilizing 5,10-methylenetetrahydrofolate (mTHF) as the methyl donor and reductant in the reaction, yielding dihydrofolate (DHF) as a by-product. This enzymatic reaction provides an intracellular de novo source of dTMP, an essential precursor for DNA biosynthesis.</text>
</comment>
<comment type="catalytic activity">
    <reaction evidence="1">
        <text>dUMP + (6R)-5,10-methylene-5,6,7,8-tetrahydrofolate = 7,8-dihydrofolate + dTMP</text>
        <dbReference type="Rhea" id="RHEA:12104"/>
        <dbReference type="ChEBI" id="CHEBI:15636"/>
        <dbReference type="ChEBI" id="CHEBI:57451"/>
        <dbReference type="ChEBI" id="CHEBI:63528"/>
        <dbReference type="ChEBI" id="CHEBI:246422"/>
        <dbReference type="EC" id="2.1.1.45"/>
    </reaction>
</comment>
<comment type="pathway">
    <text evidence="1">Pyrimidine metabolism; dTTP biosynthesis.</text>
</comment>
<comment type="subunit">
    <text evidence="1">Homodimer.</text>
</comment>
<comment type="subcellular location">
    <subcellularLocation>
        <location evidence="1">Cytoplasm</location>
    </subcellularLocation>
</comment>
<comment type="similarity">
    <text evidence="1">Belongs to the thymidylate synthase family. Bacterial-type ThyA subfamily.</text>
</comment>
<reference key="1">
    <citation type="journal article" date="2009" name="Science">
        <title>The dynamics and time scale of ongoing genomic erosion in symbiotic bacteria.</title>
        <authorList>
            <person name="Moran N.A."/>
            <person name="McLaughlin H.J."/>
            <person name="Sorek R."/>
        </authorList>
    </citation>
    <scope>NUCLEOTIDE SEQUENCE [LARGE SCALE GENOMIC DNA]</scope>
    <source>
        <strain>5A</strain>
    </source>
</reference>